<sequence length="91" mass="10146">MKKLVLLSAFVLLAFQVQADSIQNTDEEIKTEEQPGEENQAVSISFGDPEGYALQDAAIRRARRCPPCPSCLSCPWCPRCLRCPMCKCNPK</sequence>
<protein>
    <recommendedName>
        <fullName>Alpha-defensin-related sequence 12</fullName>
    </recommendedName>
    <alternativeName>
        <fullName>CRS4C5</fullName>
    </alternativeName>
    <alternativeName>
        <fullName>Cryptdin-related protein 4C-5</fullName>
    </alternativeName>
    <alternativeName>
        <fullName>Defensin-related cryptdin-related sequence 12</fullName>
    </alternativeName>
</protein>
<organism>
    <name type="scientific">Mus musculus</name>
    <name type="common">Mouse</name>
    <dbReference type="NCBI Taxonomy" id="10090"/>
    <lineage>
        <taxon>Eukaryota</taxon>
        <taxon>Metazoa</taxon>
        <taxon>Chordata</taxon>
        <taxon>Craniata</taxon>
        <taxon>Vertebrata</taxon>
        <taxon>Euteleostomi</taxon>
        <taxon>Mammalia</taxon>
        <taxon>Eutheria</taxon>
        <taxon>Euarchontoglires</taxon>
        <taxon>Glires</taxon>
        <taxon>Rodentia</taxon>
        <taxon>Myomorpha</taxon>
        <taxon>Muroidea</taxon>
        <taxon>Muridae</taxon>
        <taxon>Murinae</taxon>
        <taxon>Mus</taxon>
        <taxon>Mus</taxon>
    </lineage>
</organism>
<dbReference type="EMBL" id="S77621">
    <property type="protein sequence ID" value="AAB33828.2"/>
    <property type="molecule type" value="Genomic_DNA"/>
</dbReference>
<dbReference type="EMBL" id="S77618">
    <property type="protein sequence ID" value="AAB33828.2"/>
    <property type="status" value="JOINED"/>
    <property type="molecule type" value="Genomic_DNA"/>
</dbReference>
<dbReference type="EMBL" id="U12566">
    <property type="protein sequence ID" value="AAA20979.1"/>
    <property type="molecule type" value="Genomic_DNA"/>
</dbReference>
<dbReference type="RefSeq" id="NP_031872.1">
    <property type="nucleotide sequence ID" value="NM_007846.1"/>
</dbReference>
<dbReference type="SMR" id="P50716"/>
<dbReference type="FunCoup" id="P50716">
    <property type="interactions" value="32"/>
</dbReference>
<dbReference type="DNASU" id="13221"/>
<dbReference type="GeneID" id="13221"/>
<dbReference type="KEGG" id="mmu:13221"/>
<dbReference type="AGR" id="MGI:102514"/>
<dbReference type="CTD" id="13221"/>
<dbReference type="MGI" id="MGI:102514">
    <property type="gene designation" value="Defa-rs12"/>
</dbReference>
<dbReference type="InParanoid" id="P50716"/>
<dbReference type="PhylomeDB" id="P50716"/>
<dbReference type="PRO" id="PR:P50716"/>
<dbReference type="Proteomes" id="UP000000589">
    <property type="component" value="Unplaced"/>
</dbReference>
<dbReference type="RNAct" id="P50716">
    <property type="molecule type" value="protein"/>
</dbReference>
<dbReference type="GO" id="GO:0005615">
    <property type="term" value="C:extracellular space"/>
    <property type="evidence" value="ECO:0007669"/>
    <property type="project" value="InterPro"/>
</dbReference>
<dbReference type="GO" id="GO:0042742">
    <property type="term" value="P:defense response to bacterium"/>
    <property type="evidence" value="ECO:0007669"/>
    <property type="project" value="UniProtKB-ARBA"/>
</dbReference>
<dbReference type="InterPro" id="IPR016327">
    <property type="entry name" value="Alpha-defensin"/>
</dbReference>
<dbReference type="InterPro" id="IPR002366">
    <property type="entry name" value="Alpha-defensin_N"/>
</dbReference>
<dbReference type="PANTHER" id="PTHR11876">
    <property type="entry name" value="ALPHA-DEFENSIN 1"/>
    <property type="match status" value="1"/>
</dbReference>
<dbReference type="PANTHER" id="PTHR11876:SF2">
    <property type="entry name" value="ALPHA-DEFENSIN 1-RELATED"/>
    <property type="match status" value="1"/>
</dbReference>
<dbReference type="Pfam" id="PF00879">
    <property type="entry name" value="Defensin_propep"/>
    <property type="match status" value="1"/>
</dbReference>
<dbReference type="PIRSF" id="PIRSF001875">
    <property type="entry name" value="Alpha-defensin"/>
    <property type="match status" value="1"/>
</dbReference>
<dbReference type="SMART" id="SM01418">
    <property type="entry name" value="Defensin_propep"/>
    <property type="match status" value="1"/>
</dbReference>
<evidence type="ECO:0000250" key="1"/>
<evidence type="ECO:0000255" key="2"/>
<evidence type="ECO:0000305" key="3"/>
<name>DAR12_MOUSE</name>
<gene>
    <name type="primary">Defa-rs12</name>
    <name type="synonym">Defcr-rs12</name>
</gene>
<accession>P50716</accession>
<accession>Q64110</accession>
<proteinExistence type="evidence at transcript level"/>
<feature type="signal peptide" evidence="2">
    <location>
        <begin position="1"/>
        <end position="19"/>
    </location>
</feature>
<feature type="propeptide" id="PRO_0000006857" evidence="2">
    <location>
        <begin position="20"/>
        <end position="65"/>
    </location>
</feature>
<feature type="peptide" id="PRO_0000006858" description="Alpha-defensin-related sequence 12">
    <location>
        <begin position="66"/>
        <end position="91"/>
    </location>
</feature>
<feature type="repeat" description="1">
    <location>
        <begin position="65"/>
        <end position="67"/>
    </location>
</feature>
<feature type="repeat" description="2">
    <location>
        <begin position="68"/>
        <end position="70"/>
    </location>
</feature>
<feature type="repeat" description="3">
    <location>
        <begin position="71"/>
        <end position="73"/>
    </location>
</feature>
<feature type="repeat" description="4">
    <location>
        <begin position="74"/>
        <end position="76"/>
    </location>
</feature>
<feature type="repeat" description="5">
    <location>
        <begin position="77"/>
        <end position="79"/>
    </location>
</feature>
<feature type="repeat" description="6">
    <location>
        <begin position="83"/>
        <end position="85"/>
    </location>
</feature>
<feature type="region of interest" description="6 X 3 AA tandem repeats of C-P-X">
    <location>
        <begin position="65"/>
        <end position="88"/>
    </location>
</feature>
<feature type="sequence conflict" description="In Ref. 1; AAA20979." evidence="3" ref="1">
    <original>D</original>
    <variation>DA</variation>
    <location>
        <position position="56"/>
    </location>
</feature>
<comment type="function">
    <text evidence="1">Apparent precursor of a secreted, cationic, proline- and cysteine-rich peptide that contains Cys-Pro-Xaa repeats. Unlike cryptdin, the proposed mature peptide region lacks the structural motif characteristic of defensins. It may have microbicidal activities (By similarity).</text>
</comment>
<comment type="subcellular location">
    <subcellularLocation>
        <location>Secreted</location>
    </subcellularLocation>
</comment>
<comment type="tissue specificity">
    <text>Paneth cells of the small bowel.</text>
</comment>
<comment type="similarity">
    <text evidence="3">Belongs to the alpha-defensin family.</text>
</comment>
<keyword id="KW-0929">Antimicrobial</keyword>
<keyword id="KW-0211">Defensin</keyword>
<keyword id="KW-1185">Reference proteome</keyword>
<keyword id="KW-0677">Repeat</keyword>
<keyword id="KW-0964">Secreted</keyword>
<keyword id="KW-0732">Signal</keyword>
<reference key="1">
    <citation type="journal article" date="1994" name="Genomics">
        <title>A family of defensin-like genes codes for diverse cysteine-rich peptides in mouse Paneth cells.</title>
        <authorList>
            <person name="Huttner K.M."/>
            <person name="Ouellette A.J."/>
        </authorList>
    </citation>
    <scope>NUCLEOTIDE SEQUENCE [GENOMIC DNA]</scope>
    <source>
        <strain>129/SvJ</strain>
        <tissue>Small intestine</tissue>
    </source>
</reference>